<sequence>MSDLSTLRQSYLDRISAAADGDALEQVRLAALGKKGEISGMMKELGRMTPEERQTTGAALNRLKDEIDAALRARKQGLEDAALDARLKEEWLDVTLPGRPRPQGTIHPISQVTEEVTAIFADMGFRVAEGPQIESDWFNFDALNIPPEHPARQEHDTFFMARAGDDPRPPQVLRTHTSPVQIRAMQATGAPIRVICPGRVYRMDMDQTHTPMFHQVEGLALGKDISMANLKWTLEEFCRAFFEVDEVELRFRASHFPFTEPSAEVDIRCSWEGGKLTIGQGESWLEILGSGMVHPKVLAAGGIDPEQWQGFAFGMGIDRIAMLKYGIPDLRAFFESDLRWLRHYGFAAGDVPSVAGGLSR</sequence>
<protein>
    <recommendedName>
        <fullName evidence="1">Phenylalanine--tRNA ligase alpha subunit</fullName>
        <ecNumber evidence="1">6.1.1.20</ecNumber>
    </recommendedName>
    <alternativeName>
        <fullName evidence="1">Phenylalanyl-tRNA synthetase alpha subunit</fullName>
        <shortName evidence="1">PheRS</shortName>
    </alternativeName>
</protein>
<name>SYFA_PARDP</name>
<dbReference type="EC" id="6.1.1.20" evidence="1"/>
<dbReference type="EMBL" id="CP000489">
    <property type="protein sequence ID" value="ABL70362.1"/>
    <property type="molecule type" value="Genomic_DNA"/>
</dbReference>
<dbReference type="RefSeq" id="WP_011748556.1">
    <property type="nucleotide sequence ID" value="NC_008686.1"/>
</dbReference>
<dbReference type="SMR" id="A1B4B8"/>
<dbReference type="STRING" id="318586.Pden_2270"/>
<dbReference type="EnsemblBacteria" id="ABL70362">
    <property type="protein sequence ID" value="ABL70362"/>
    <property type="gene ID" value="Pden_2270"/>
</dbReference>
<dbReference type="GeneID" id="93450669"/>
<dbReference type="KEGG" id="pde:Pden_2270"/>
<dbReference type="eggNOG" id="COG0016">
    <property type="taxonomic scope" value="Bacteria"/>
</dbReference>
<dbReference type="HOGENOM" id="CLU_025086_0_1_5"/>
<dbReference type="OrthoDB" id="9800719at2"/>
<dbReference type="Proteomes" id="UP000000361">
    <property type="component" value="Chromosome 1"/>
</dbReference>
<dbReference type="GO" id="GO:0005737">
    <property type="term" value="C:cytoplasm"/>
    <property type="evidence" value="ECO:0007669"/>
    <property type="project" value="UniProtKB-SubCell"/>
</dbReference>
<dbReference type="GO" id="GO:0005524">
    <property type="term" value="F:ATP binding"/>
    <property type="evidence" value="ECO:0007669"/>
    <property type="project" value="UniProtKB-UniRule"/>
</dbReference>
<dbReference type="GO" id="GO:0000287">
    <property type="term" value="F:magnesium ion binding"/>
    <property type="evidence" value="ECO:0007669"/>
    <property type="project" value="UniProtKB-UniRule"/>
</dbReference>
<dbReference type="GO" id="GO:0004826">
    <property type="term" value="F:phenylalanine-tRNA ligase activity"/>
    <property type="evidence" value="ECO:0007669"/>
    <property type="project" value="UniProtKB-UniRule"/>
</dbReference>
<dbReference type="GO" id="GO:0000049">
    <property type="term" value="F:tRNA binding"/>
    <property type="evidence" value="ECO:0007669"/>
    <property type="project" value="InterPro"/>
</dbReference>
<dbReference type="GO" id="GO:0006432">
    <property type="term" value="P:phenylalanyl-tRNA aminoacylation"/>
    <property type="evidence" value="ECO:0007669"/>
    <property type="project" value="UniProtKB-UniRule"/>
</dbReference>
<dbReference type="CDD" id="cd00496">
    <property type="entry name" value="PheRS_alpha_core"/>
    <property type="match status" value="1"/>
</dbReference>
<dbReference type="FunFam" id="3.30.930.10:FF:000003">
    <property type="entry name" value="Phenylalanine--tRNA ligase alpha subunit"/>
    <property type="match status" value="1"/>
</dbReference>
<dbReference type="Gene3D" id="3.30.930.10">
    <property type="entry name" value="Bira Bifunctional Protein, Domain 2"/>
    <property type="match status" value="1"/>
</dbReference>
<dbReference type="HAMAP" id="MF_00281">
    <property type="entry name" value="Phe_tRNA_synth_alpha1"/>
    <property type="match status" value="1"/>
</dbReference>
<dbReference type="InterPro" id="IPR006195">
    <property type="entry name" value="aa-tRNA-synth_II"/>
</dbReference>
<dbReference type="InterPro" id="IPR045864">
    <property type="entry name" value="aa-tRNA-synth_II/BPL/LPL"/>
</dbReference>
<dbReference type="InterPro" id="IPR004529">
    <property type="entry name" value="Phe-tRNA-synth_IIc_asu"/>
</dbReference>
<dbReference type="InterPro" id="IPR004188">
    <property type="entry name" value="Phe-tRNA_ligase_II_N"/>
</dbReference>
<dbReference type="InterPro" id="IPR022911">
    <property type="entry name" value="Phe_tRNA_ligase_alpha1_bac"/>
</dbReference>
<dbReference type="InterPro" id="IPR002319">
    <property type="entry name" value="Phenylalanyl-tRNA_Synthase"/>
</dbReference>
<dbReference type="InterPro" id="IPR010978">
    <property type="entry name" value="tRNA-bd_arm"/>
</dbReference>
<dbReference type="NCBIfam" id="TIGR00468">
    <property type="entry name" value="pheS"/>
    <property type="match status" value="1"/>
</dbReference>
<dbReference type="PANTHER" id="PTHR11538:SF41">
    <property type="entry name" value="PHENYLALANINE--TRNA LIGASE, MITOCHONDRIAL"/>
    <property type="match status" value="1"/>
</dbReference>
<dbReference type="PANTHER" id="PTHR11538">
    <property type="entry name" value="PHENYLALANYL-TRNA SYNTHETASE"/>
    <property type="match status" value="1"/>
</dbReference>
<dbReference type="Pfam" id="PF02912">
    <property type="entry name" value="Phe_tRNA-synt_N"/>
    <property type="match status" value="1"/>
</dbReference>
<dbReference type="Pfam" id="PF01409">
    <property type="entry name" value="tRNA-synt_2d"/>
    <property type="match status" value="1"/>
</dbReference>
<dbReference type="SUPFAM" id="SSF55681">
    <property type="entry name" value="Class II aaRS and biotin synthetases"/>
    <property type="match status" value="1"/>
</dbReference>
<dbReference type="SUPFAM" id="SSF46589">
    <property type="entry name" value="tRNA-binding arm"/>
    <property type="match status" value="1"/>
</dbReference>
<dbReference type="PROSITE" id="PS50862">
    <property type="entry name" value="AA_TRNA_LIGASE_II"/>
    <property type="match status" value="1"/>
</dbReference>
<keyword id="KW-0030">Aminoacyl-tRNA synthetase</keyword>
<keyword id="KW-0067">ATP-binding</keyword>
<keyword id="KW-0963">Cytoplasm</keyword>
<keyword id="KW-0436">Ligase</keyword>
<keyword id="KW-0460">Magnesium</keyword>
<keyword id="KW-0479">Metal-binding</keyword>
<keyword id="KW-0547">Nucleotide-binding</keyword>
<keyword id="KW-0648">Protein biosynthesis</keyword>
<keyword id="KW-1185">Reference proteome</keyword>
<evidence type="ECO:0000255" key="1">
    <source>
        <dbReference type="HAMAP-Rule" id="MF_00281"/>
    </source>
</evidence>
<gene>
    <name evidence="1" type="primary">pheS</name>
    <name type="ordered locus">Pden_2270</name>
</gene>
<proteinExistence type="inferred from homology"/>
<accession>A1B4B8</accession>
<feature type="chain" id="PRO_1000006870" description="Phenylalanine--tRNA ligase alpha subunit">
    <location>
        <begin position="1"/>
        <end position="360"/>
    </location>
</feature>
<feature type="binding site" evidence="1">
    <location>
        <position position="260"/>
    </location>
    <ligand>
        <name>Mg(2+)</name>
        <dbReference type="ChEBI" id="CHEBI:18420"/>
        <note>shared with beta subunit</note>
    </ligand>
</feature>
<reference key="1">
    <citation type="submission" date="2006-12" db="EMBL/GenBank/DDBJ databases">
        <title>Complete sequence of chromosome 1 of Paracoccus denitrificans PD1222.</title>
        <authorList>
            <person name="Copeland A."/>
            <person name="Lucas S."/>
            <person name="Lapidus A."/>
            <person name="Barry K."/>
            <person name="Detter J.C."/>
            <person name="Glavina del Rio T."/>
            <person name="Hammon N."/>
            <person name="Israni S."/>
            <person name="Dalin E."/>
            <person name="Tice H."/>
            <person name="Pitluck S."/>
            <person name="Munk A.C."/>
            <person name="Brettin T."/>
            <person name="Bruce D."/>
            <person name="Han C."/>
            <person name="Tapia R."/>
            <person name="Gilna P."/>
            <person name="Schmutz J."/>
            <person name="Larimer F."/>
            <person name="Land M."/>
            <person name="Hauser L."/>
            <person name="Kyrpides N."/>
            <person name="Lykidis A."/>
            <person name="Spiro S."/>
            <person name="Richardson D.J."/>
            <person name="Moir J.W.B."/>
            <person name="Ferguson S.J."/>
            <person name="van Spanning R.J.M."/>
            <person name="Richardson P."/>
        </authorList>
    </citation>
    <scope>NUCLEOTIDE SEQUENCE [LARGE SCALE GENOMIC DNA]</scope>
    <source>
        <strain>Pd 1222</strain>
    </source>
</reference>
<comment type="catalytic activity">
    <reaction evidence="1">
        <text>tRNA(Phe) + L-phenylalanine + ATP = L-phenylalanyl-tRNA(Phe) + AMP + diphosphate + H(+)</text>
        <dbReference type="Rhea" id="RHEA:19413"/>
        <dbReference type="Rhea" id="RHEA-COMP:9668"/>
        <dbReference type="Rhea" id="RHEA-COMP:9699"/>
        <dbReference type="ChEBI" id="CHEBI:15378"/>
        <dbReference type="ChEBI" id="CHEBI:30616"/>
        <dbReference type="ChEBI" id="CHEBI:33019"/>
        <dbReference type="ChEBI" id="CHEBI:58095"/>
        <dbReference type="ChEBI" id="CHEBI:78442"/>
        <dbReference type="ChEBI" id="CHEBI:78531"/>
        <dbReference type="ChEBI" id="CHEBI:456215"/>
        <dbReference type="EC" id="6.1.1.20"/>
    </reaction>
</comment>
<comment type="cofactor">
    <cofactor evidence="1">
        <name>Mg(2+)</name>
        <dbReference type="ChEBI" id="CHEBI:18420"/>
    </cofactor>
    <text evidence="1">Binds 2 magnesium ions per tetramer.</text>
</comment>
<comment type="subunit">
    <text evidence="1">Tetramer of two alpha and two beta subunits.</text>
</comment>
<comment type="subcellular location">
    <subcellularLocation>
        <location evidence="1">Cytoplasm</location>
    </subcellularLocation>
</comment>
<comment type="similarity">
    <text evidence="1">Belongs to the class-II aminoacyl-tRNA synthetase family. Phe-tRNA synthetase alpha subunit type 1 subfamily.</text>
</comment>
<organism>
    <name type="scientific">Paracoccus denitrificans (strain Pd 1222)</name>
    <dbReference type="NCBI Taxonomy" id="318586"/>
    <lineage>
        <taxon>Bacteria</taxon>
        <taxon>Pseudomonadati</taxon>
        <taxon>Pseudomonadota</taxon>
        <taxon>Alphaproteobacteria</taxon>
        <taxon>Rhodobacterales</taxon>
        <taxon>Paracoccaceae</taxon>
        <taxon>Paracoccus</taxon>
    </lineage>
</organism>